<gene>
    <name type="ordered locus">VV2_1434</name>
</gene>
<keyword id="KW-0963">Cytoplasm</keyword>
<keyword id="KW-0489">Methyltransferase</keyword>
<keyword id="KW-0949">S-adenosyl-L-methionine</keyword>
<keyword id="KW-0808">Transferase</keyword>
<dbReference type="EC" id="2.1.1.-" evidence="1"/>
<dbReference type="EMBL" id="AE016796">
    <property type="protein sequence ID" value="AAO08313.1"/>
    <property type="molecule type" value="Genomic_DNA"/>
</dbReference>
<dbReference type="RefSeq" id="WP_011082309.1">
    <property type="nucleotide sequence ID" value="NC_004460.2"/>
</dbReference>
<dbReference type="SMR" id="Q8D477"/>
<dbReference type="KEGG" id="vvu:VV2_1434"/>
<dbReference type="HOGENOM" id="CLU_107018_0_0_6"/>
<dbReference type="Proteomes" id="UP000002275">
    <property type="component" value="Chromosome 2"/>
</dbReference>
<dbReference type="GO" id="GO:0005737">
    <property type="term" value="C:cytoplasm"/>
    <property type="evidence" value="ECO:0007669"/>
    <property type="project" value="UniProtKB-SubCell"/>
</dbReference>
<dbReference type="GO" id="GO:0008757">
    <property type="term" value="F:S-adenosylmethionine-dependent methyltransferase activity"/>
    <property type="evidence" value="ECO:0007669"/>
    <property type="project" value="UniProtKB-UniRule"/>
</dbReference>
<dbReference type="GO" id="GO:0008175">
    <property type="term" value="F:tRNA methyltransferase activity"/>
    <property type="evidence" value="ECO:0007669"/>
    <property type="project" value="InterPro"/>
</dbReference>
<dbReference type="GO" id="GO:0030488">
    <property type="term" value="P:tRNA methylation"/>
    <property type="evidence" value="ECO:0007669"/>
    <property type="project" value="TreeGrafter"/>
</dbReference>
<dbReference type="CDD" id="cd18087">
    <property type="entry name" value="TrmY-like"/>
    <property type="match status" value="1"/>
</dbReference>
<dbReference type="Gene3D" id="3.40.1280.10">
    <property type="match status" value="1"/>
</dbReference>
<dbReference type="HAMAP" id="MF_00587">
    <property type="entry name" value="tRNA_methyltr_TrmY"/>
    <property type="match status" value="1"/>
</dbReference>
<dbReference type="InterPro" id="IPR029028">
    <property type="entry name" value="Alpha/beta_knot_MTases"/>
</dbReference>
<dbReference type="InterPro" id="IPR007158">
    <property type="entry name" value="TrmY"/>
</dbReference>
<dbReference type="InterPro" id="IPR029026">
    <property type="entry name" value="tRNA_m1G_MTases_N"/>
</dbReference>
<dbReference type="NCBIfam" id="NF002560">
    <property type="entry name" value="PRK02135.1"/>
    <property type="match status" value="1"/>
</dbReference>
<dbReference type="PANTHER" id="PTHR40703">
    <property type="entry name" value="TRNA (PSEUDOURIDINE(54)-N(1))-METHYLTRANSFERASE"/>
    <property type="match status" value="1"/>
</dbReference>
<dbReference type="PANTHER" id="PTHR40703:SF1">
    <property type="entry name" value="TRNA (PSEUDOURIDINE(54)-N(1))-METHYLTRANSFERASE"/>
    <property type="match status" value="1"/>
</dbReference>
<dbReference type="Pfam" id="PF04013">
    <property type="entry name" value="Methyltrn_RNA_2"/>
    <property type="match status" value="1"/>
</dbReference>
<dbReference type="SUPFAM" id="SSF75217">
    <property type="entry name" value="alpha/beta knot"/>
    <property type="match status" value="1"/>
</dbReference>
<proteinExistence type="inferred from homology"/>
<feature type="chain" id="PRO_0000157958" description="Putative pseudouridine methyltransferase">
    <location>
        <begin position="1"/>
        <end position="198"/>
    </location>
</feature>
<feature type="binding site" evidence="1">
    <location>
        <position position="132"/>
    </location>
    <ligand>
        <name>S-adenosyl-L-methionine</name>
        <dbReference type="ChEBI" id="CHEBI:59789"/>
    </ligand>
</feature>
<feature type="binding site" evidence="1">
    <location>
        <position position="186"/>
    </location>
    <ligand>
        <name>S-adenosyl-L-methionine</name>
        <dbReference type="ChEBI" id="CHEBI:59789"/>
    </ligand>
</feature>
<comment type="subcellular location">
    <subcellularLocation>
        <location evidence="1">Cytoplasm</location>
    </subcellularLocation>
</comment>
<comment type="similarity">
    <text evidence="1">Belongs to the methyltransferase superfamily. TrmY family.</text>
</comment>
<name>TRMYL_VIBVU</name>
<reference key="1">
    <citation type="submission" date="2002-12" db="EMBL/GenBank/DDBJ databases">
        <title>Complete genome sequence of Vibrio vulnificus CMCP6.</title>
        <authorList>
            <person name="Rhee J.H."/>
            <person name="Kim S.Y."/>
            <person name="Chung S.S."/>
            <person name="Kim J.J."/>
            <person name="Moon Y.H."/>
            <person name="Jeong H."/>
            <person name="Choy H.E."/>
        </authorList>
    </citation>
    <scope>NUCLEOTIDE SEQUENCE [LARGE SCALE GENOMIC DNA]</scope>
    <source>
        <strain>CMCP6</strain>
    </source>
</reference>
<sequence length="198" mass="22209">MRTFVLRARAAPTNSRALLEGVGNEAHTEILAHTLMNTMFVAQSHRQDVVVHLVLESTKDFSRTITIHSNEVSNVGGFHEANLLNIVVRALDASTGMGKEELRNVEPGVTVRTISFERLVQQLAENHQLYMLEKKGEFVRDIKFAANPCFLLTDHIPMPKKTFNSLKRLGTQNISLGPKMLFASQCVTLIQNELDLQE</sequence>
<organism>
    <name type="scientific">Vibrio vulnificus (strain CMCP6)</name>
    <dbReference type="NCBI Taxonomy" id="216895"/>
    <lineage>
        <taxon>Bacteria</taxon>
        <taxon>Pseudomonadati</taxon>
        <taxon>Pseudomonadota</taxon>
        <taxon>Gammaproteobacteria</taxon>
        <taxon>Vibrionales</taxon>
        <taxon>Vibrionaceae</taxon>
        <taxon>Vibrio</taxon>
    </lineage>
</organism>
<evidence type="ECO:0000255" key="1">
    <source>
        <dbReference type="HAMAP-Rule" id="MF_00587"/>
    </source>
</evidence>
<accession>Q8D477</accession>
<protein>
    <recommendedName>
        <fullName evidence="1">Putative pseudouridine methyltransferase</fullName>
        <ecNumber evidence="1">2.1.1.-</ecNumber>
    </recommendedName>
</protein>